<name>SC160_YEAST</name>
<feature type="chain" id="PRO_0000050128" description="Protein SCP160">
    <location>
        <begin position="1"/>
        <end position="1222"/>
    </location>
</feature>
<feature type="domain" description="KH 1" evidence="1">
    <location>
        <begin position="177"/>
        <end position="249"/>
    </location>
</feature>
<feature type="domain" description="KH 2" evidence="1">
    <location>
        <begin position="634"/>
        <end position="702"/>
    </location>
</feature>
<feature type="domain" description="KH 3" evidence="1">
    <location>
        <begin position="712"/>
        <end position="771"/>
    </location>
</feature>
<feature type="domain" description="KH 4" evidence="1">
    <location>
        <begin position="782"/>
        <end position="851"/>
    </location>
</feature>
<feature type="domain" description="KH 5" evidence="1">
    <location>
        <begin position="861"/>
        <end position="929"/>
    </location>
</feature>
<feature type="domain" description="KH 6" evidence="1">
    <location>
        <begin position="939"/>
        <end position="1001"/>
    </location>
</feature>
<feature type="domain" description="KH 7" evidence="1">
    <location>
        <begin position="1153"/>
        <end position="1216"/>
    </location>
</feature>
<feature type="region of interest" description="Disordered" evidence="2">
    <location>
        <begin position="1"/>
        <end position="59"/>
    </location>
</feature>
<feature type="region of interest" description="Disordered" evidence="2">
    <location>
        <begin position="79"/>
        <end position="98"/>
    </location>
</feature>
<feature type="compositionally biased region" description="Polar residues" evidence="2">
    <location>
        <begin position="1"/>
        <end position="12"/>
    </location>
</feature>
<feature type="compositionally biased region" description="Low complexity" evidence="2">
    <location>
        <begin position="13"/>
        <end position="38"/>
    </location>
</feature>
<feature type="compositionally biased region" description="Basic and acidic residues" evidence="2">
    <location>
        <begin position="39"/>
        <end position="49"/>
    </location>
</feature>
<feature type="modified residue" description="Phosphothreonine" evidence="4 5 6">
    <location>
        <position position="50"/>
    </location>
</feature>
<feature type="modified residue" description="Phosphoserine" evidence="6">
    <location>
        <position position="54"/>
    </location>
</feature>
<feature type="modified residue" description="Phosphoserine" evidence="5 6">
    <location>
        <position position="63"/>
    </location>
</feature>
<feature type="modified residue" description="Phosphoserine" evidence="4">
    <location>
        <position position="85"/>
    </location>
</feature>
<feature type="modified residue" description="Phosphoserine" evidence="6">
    <location>
        <position position="87"/>
    </location>
</feature>
<feature type="modified residue" description="Phosphoserine" evidence="4">
    <location>
        <position position="89"/>
    </location>
</feature>
<feature type="modified residue" description="Phosphoserine" evidence="5">
    <location>
        <position position="630"/>
    </location>
</feature>
<feature type="modified residue" description="Phosphoserine" evidence="5 6">
    <location>
        <position position="1112"/>
    </location>
</feature>
<feature type="sequence conflict" description="In Ref. 1; CAA46597." evidence="3" ref="1">
    <original>E</original>
    <variation>G</variation>
    <location>
        <position position="287"/>
    </location>
</feature>
<feature type="sequence conflict" description="In Ref. 1; CAA46597." evidence="3" ref="1">
    <original>L</original>
    <variation>S</variation>
    <location>
        <position position="303"/>
    </location>
</feature>
<feature type="sequence conflict" description="In Ref. 1; CAA46597." evidence="3" ref="1">
    <original>K</original>
    <variation>Q</variation>
    <location>
        <position position="308"/>
    </location>
</feature>
<feature type="sequence conflict" description="In Ref. 1; CAA46597." evidence="3" ref="1">
    <original>E</original>
    <variation>K</variation>
    <location>
        <position position="330"/>
    </location>
</feature>
<feature type="sequence conflict" description="In Ref. 1; CAA46597." evidence="3" ref="1">
    <original>D</original>
    <variation>G</variation>
    <location>
        <position position="362"/>
    </location>
</feature>
<feature type="sequence conflict" description="In Ref. 1; CAA46597." evidence="3" ref="1">
    <original>I</original>
    <variation>N</variation>
    <location>
        <position position="411"/>
    </location>
</feature>
<feature type="sequence conflict" description="In Ref. 3; CAA28383." evidence="3" ref="3">
    <original>L</original>
    <variation>F</variation>
    <location>
        <position position="884"/>
    </location>
</feature>
<feature type="sequence conflict" description="In Ref. 1; CAA46597." evidence="3" ref="1">
    <original>E</original>
    <variation>D</variation>
    <location>
        <position position="886"/>
    </location>
</feature>
<feature type="sequence conflict" description="In Ref. 1; CAA46597." evidence="3" ref="1">
    <original>I</original>
    <variation>V</variation>
    <location>
        <position position="960"/>
    </location>
</feature>
<feature type="sequence conflict" description="In Ref. 1; CAA46597." evidence="3" ref="1">
    <original>C</original>
    <variation>R</variation>
    <location>
        <position position="1067"/>
    </location>
</feature>
<feature type="sequence conflict" description="In Ref. 1; CAA46597." evidence="3" ref="1">
    <original>A</original>
    <variation>E</variation>
    <location>
        <position position="1087"/>
    </location>
</feature>
<comment type="function">
    <text>Involved in the control of mitotic chromosome transmission. Required during cell division for faithful partitioning of the ER-nuclear envelope membranes which, in S.cerevisiae, enclose the duplicated chromosomes.</text>
</comment>
<comment type="subcellular location">
    <subcellularLocation>
        <location>Endoplasmic reticulum membrane</location>
        <topology>Peripheral membrane protein</topology>
        <orientation>Cytoplasmic side</orientation>
    </subcellularLocation>
    <subcellularLocation>
        <location>Nucleus membrane</location>
        <topology>Peripheral membrane protein</topology>
        <orientation>Cytoplasmic side</orientation>
    </subcellularLocation>
    <text>Attached to the cytoplasmic surface of the ER-nuclear envelope membranes.</text>
</comment>
<reference key="1">
    <citation type="journal article" date="1995" name="Yeast">
        <title>Scp160p, a new yeast protein associated with the nuclear membrane and the endoplasmic reticulum, is necessary for maintenance of exact ploidy.</title>
        <authorList>
            <person name="Wintersberger U."/>
            <person name="Kuehne C."/>
            <person name="Karwan A."/>
        </authorList>
    </citation>
    <scope>NUCLEOTIDE SEQUENCE [GENOMIC DNA]</scope>
</reference>
<reference key="2">
    <citation type="journal article" date="1995" name="Yeast">
        <title>Sequence analysis of a 33.1 kb fragment from the left arm of Saccharomyces cerevisiae chromosome X, including putative proteins with leucine zippers, a fungal Zn(II)2-Cys6 binuclear cluster domain and a putative alpha 2-SCB-alpha 2 binding site.</title>
        <authorList>
            <person name="Miosga T."/>
            <person name="Schaaff-Gerstenschlaeger I."/>
            <person name="Chalwatzis N."/>
            <person name="Baur A."/>
            <person name="Boles E."/>
            <person name="Fournier C."/>
            <person name="Schmitt S."/>
            <person name="Velten C."/>
            <person name="Wilhelm N."/>
            <person name="Zimmermann F.K."/>
        </authorList>
    </citation>
    <scope>NUCLEOTIDE SEQUENCE [GENOMIC DNA]</scope>
    <source>
        <strain>ATCC 204508 / S288c</strain>
    </source>
</reference>
<reference key="3">
    <citation type="journal article" date="1996" name="EMBO J.">
        <title>Complete nucleotide sequence of Saccharomyces cerevisiae chromosome X.</title>
        <authorList>
            <person name="Galibert F."/>
            <person name="Alexandraki D."/>
            <person name="Baur A."/>
            <person name="Boles E."/>
            <person name="Chalwatzis N."/>
            <person name="Chuat J.-C."/>
            <person name="Coster F."/>
            <person name="Cziepluch C."/>
            <person name="de Haan M."/>
            <person name="Domdey H."/>
            <person name="Durand P."/>
            <person name="Entian K.-D."/>
            <person name="Gatius M."/>
            <person name="Goffeau A."/>
            <person name="Grivell L.A."/>
            <person name="Hennemann A."/>
            <person name="Herbert C.J."/>
            <person name="Heumann K."/>
            <person name="Hilger F."/>
            <person name="Hollenberg C.P."/>
            <person name="Huang M.-E."/>
            <person name="Jacq C."/>
            <person name="Jauniaux J.-C."/>
            <person name="Katsoulou C."/>
            <person name="Kirchrath L."/>
            <person name="Kleine K."/>
            <person name="Kordes E."/>
            <person name="Koetter P."/>
            <person name="Liebl S."/>
            <person name="Louis E.J."/>
            <person name="Manus V."/>
            <person name="Mewes H.-W."/>
            <person name="Miosga T."/>
            <person name="Obermaier B."/>
            <person name="Perea J."/>
            <person name="Pohl T.M."/>
            <person name="Portetelle D."/>
            <person name="Pujol A."/>
            <person name="Purnelle B."/>
            <person name="Ramezani Rad M."/>
            <person name="Rasmussen S.W."/>
            <person name="Rose M."/>
            <person name="Rossau R."/>
            <person name="Schaaff-Gerstenschlaeger I."/>
            <person name="Smits P.H.M."/>
            <person name="Scarcez T."/>
            <person name="Soriano N."/>
            <person name="To Van D."/>
            <person name="Tzermia M."/>
            <person name="Van Broekhoven A."/>
            <person name="Vandenbol M."/>
            <person name="Wedler H."/>
            <person name="von Wettstein D."/>
            <person name="Wambutt R."/>
            <person name="Zagulski M."/>
            <person name="Zollner A."/>
            <person name="Karpfinger-Hartl L."/>
        </authorList>
    </citation>
    <scope>NUCLEOTIDE SEQUENCE [LARGE SCALE GENOMIC DNA]</scope>
    <source>
        <strain>ATCC 204508 / S288c</strain>
    </source>
</reference>
<reference key="4">
    <citation type="journal article" date="2014" name="G3 (Bethesda)">
        <title>The reference genome sequence of Saccharomyces cerevisiae: Then and now.</title>
        <authorList>
            <person name="Engel S.R."/>
            <person name="Dietrich F.S."/>
            <person name="Fisk D.G."/>
            <person name="Binkley G."/>
            <person name="Balakrishnan R."/>
            <person name="Costanzo M.C."/>
            <person name="Dwight S.S."/>
            <person name="Hitz B.C."/>
            <person name="Karra K."/>
            <person name="Nash R.S."/>
            <person name="Weng S."/>
            <person name="Wong E.D."/>
            <person name="Lloyd P."/>
            <person name="Skrzypek M.S."/>
            <person name="Miyasato S.R."/>
            <person name="Simison M."/>
            <person name="Cherry J.M."/>
        </authorList>
    </citation>
    <scope>GENOME REANNOTATION</scope>
    <source>
        <strain>ATCC 204508 / S288c</strain>
    </source>
</reference>
<reference key="5">
    <citation type="journal article" date="1986" name="Nucleic Acids Res.">
        <title>A yeast protein HX has homologies with the histone H2AF expressed in chicken embryo.</title>
        <authorList>
            <person name="Delahodde A."/>
            <person name="Becam A.-M."/>
            <person name="Perea J."/>
            <person name="Jacq C."/>
        </authorList>
    </citation>
    <scope>NUCLEOTIDE SEQUENCE [MRNA] OF 559-1222</scope>
</reference>
<reference key="6">
    <citation type="journal article" date="2007" name="J. Proteome Res.">
        <title>Large-scale phosphorylation analysis of alpha-factor-arrested Saccharomyces cerevisiae.</title>
        <authorList>
            <person name="Li X."/>
            <person name="Gerber S.A."/>
            <person name="Rudner A.D."/>
            <person name="Beausoleil S.A."/>
            <person name="Haas W."/>
            <person name="Villen J."/>
            <person name="Elias J.E."/>
            <person name="Gygi S.P."/>
        </authorList>
    </citation>
    <scope>PHOSPHORYLATION [LARGE SCALE ANALYSIS] AT THR-50; SER-85 AND SER-89</scope>
    <scope>IDENTIFICATION BY MASS SPECTROMETRY [LARGE SCALE ANALYSIS]</scope>
    <source>
        <strain>ADR376</strain>
    </source>
</reference>
<reference key="7">
    <citation type="journal article" date="2008" name="Mol. Cell. Proteomics">
        <title>A multidimensional chromatography technology for in-depth phosphoproteome analysis.</title>
        <authorList>
            <person name="Albuquerque C.P."/>
            <person name="Smolka M.B."/>
            <person name="Payne S.H."/>
            <person name="Bafna V."/>
            <person name="Eng J."/>
            <person name="Zhou H."/>
        </authorList>
    </citation>
    <scope>PHOSPHORYLATION [LARGE SCALE ANALYSIS] AT THR-50; SER-63; SER-630 AND SER-1112</scope>
    <scope>IDENTIFICATION BY MASS SPECTROMETRY [LARGE SCALE ANALYSIS]</scope>
</reference>
<reference key="8">
    <citation type="journal article" date="2009" name="Science">
        <title>Global analysis of Cdk1 substrate phosphorylation sites provides insights into evolution.</title>
        <authorList>
            <person name="Holt L.J."/>
            <person name="Tuch B.B."/>
            <person name="Villen J."/>
            <person name="Johnson A.D."/>
            <person name="Gygi S.P."/>
            <person name="Morgan D.O."/>
        </authorList>
    </citation>
    <scope>PHOSPHORYLATION [LARGE SCALE ANALYSIS] AT THR-50; SER-54; SER-63; SER-87 AND SER-1112</scope>
    <scope>IDENTIFICATION BY MASS SPECTROMETRY [LARGE SCALE ANALYSIS]</scope>
</reference>
<accession>P06105</accession>
<accession>D6VWA3</accession>
<gene>
    <name type="primary">SCP160</name>
    <name type="synonym">HX</name>
    <name type="ordered locus">YJL080C</name>
    <name type="ORF">J1017</name>
</gene>
<organism>
    <name type="scientific">Saccharomyces cerevisiae (strain ATCC 204508 / S288c)</name>
    <name type="common">Baker's yeast</name>
    <dbReference type="NCBI Taxonomy" id="559292"/>
    <lineage>
        <taxon>Eukaryota</taxon>
        <taxon>Fungi</taxon>
        <taxon>Dikarya</taxon>
        <taxon>Ascomycota</taxon>
        <taxon>Saccharomycotina</taxon>
        <taxon>Saccharomycetes</taxon>
        <taxon>Saccharomycetales</taxon>
        <taxon>Saccharomycetaceae</taxon>
        <taxon>Saccharomyces</taxon>
    </lineage>
</organism>
<dbReference type="EMBL" id="X65645">
    <property type="protein sequence ID" value="CAA46597.1"/>
    <property type="molecule type" value="Genomic_DNA"/>
</dbReference>
<dbReference type="EMBL" id="Z49355">
    <property type="protein sequence ID" value="CAA89373.1"/>
    <property type="molecule type" value="Genomic_DNA"/>
</dbReference>
<dbReference type="EMBL" id="Z49354">
    <property type="protein sequence ID" value="CAA89371.1"/>
    <property type="molecule type" value="Genomic_DNA"/>
</dbReference>
<dbReference type="EMBL" id="X88851">
    <property type="protein sequence ID" value="CAA61316.1"/>
    <property type="molecule type" value="Genomic_DNA"/>
</dbReference>
<dbReference type="EMBL" id="X83502">
    <property type="protein sequence ID" value="CAA58490.1"/>
    <property type="molecule type" value="Genomic_DNA"/>
</dbReference>
<dbReference type="EMBL" id="X04679">
    <property type="protein sequence ID" value="CAA28383.1"/>
    <property type="molecule type" value="mRNA"/>
</dbReference>
<dbReference type="EMBL" id="BK006943">
    <property type="protein sequence ID" value="DAA08719.1"/>
    <property type="molecule type" value="Genomic_DNA"/>
</dbReference>
<dbReference type="PIR" id="S56030">
    <property type="entry name" value="S56030"/>
</dbReference>
<dbReference type="RefSeq" id="NP_012455.1">
    <property type="nucleotide sequence ID" value="NM_001181513.1"/>
</dbReference>
<dbReference type="SMR" id="P06105"/>
<dbReference type="BioGRID" id="33676">
    <property type="interactions" value="286"/>
</dbReference>
<dbReference type="DIP" id="DIP-2742N"/>
<dbReference type="FunCoup" id="P06105">
    <property type="interactions" value="875"/>
</dbReference>
<dbReference type="IntAct" id="P06105">
    <property type="interactions" value="47"/>
</dbReference>
<dbReference type="MINT" id="P06105"/>
<dbReference type="STRING" id="4932.YJL080C"/>
<dbReference type="GlyGen" id="P06105">
    <property type="glycosylation" value="2 sites, 1 O-linked glycan (2 sites)"/>
</dbReference>
<dbReference type="iPTMnet" id="P06105"/>
<dbReference type="PaxDb" id="4932-YJL080C"/>
<dbReference type="PeptideAtlas" id="P06105"/>
<dbReference type="EnsemblFungi" id="YJL080C_mRNA">
    <property type="protein sequence ID" value="YJL080C"/>
    <property type="gene ID" value="YJL080C"/>
</dbReference>
<dbReference type="GeneID" id="853365"/>
<dbReference type="KEGG" id="sce:YJL080C"/>
<dbReference type="AGR" id="SGD:S000003616"/>
<dbReference type="SGD" id="S000003616">
    <property type="gene designation" value="SCP160"/>
</dbReference>
<dbReference type="VEuPathDB" id="FungiDB:YJL080C"/>
<dbReference type="eggNOG" id="KOG2208">
    <property type="taxonomic scope" value="Eukaryota"/>
</dbReference>
<dbReference type="GeneTree" id="ENSGT00940000168637"/>
<dbReference type="HOGENOM" id="CLU_003293_1_0_1"/>
<dbReference type="InParanoid" id="P06105"/>
<dbReference type="OMA" id="WGPNMKP"/>
<dbReference type="OrthoDB" id="10027144at2759"/>
<dbReference type="BioCyc" id="YEAST:G3O-31537-MONOMER"/>
<dbReference type="BioGRID-ORCS" id="853365">
    <property type="hits" value="3 hits in 10 CRISPR screens"/>
</dbReference>
<dbReference type="CD-CODE" id="A777E0F8">
    <property type="entry name" value="P-body"/>
</dbReference>
<dbReference type="CD-CODE" id="E03F929F">
    <property type="entry name" value="Stress granule"/>
</dbReference>
<dbReference type="PRO" id="PR:P06105"/>
<dbReference type="Proteomes" id="UP000002311">
    <property type="component" value="Chromosome X"/>
</dbReference>
<dbReference type="RNAct" id="P06105">
    <property type="molecule type" value="protein"/>
</dbReference>
<dbReference type="GO" id="GO:0000781">
    <property type="term" value="C:chromosome, telomeric region"/>
    <property type="evidence" value="ECO:0007669"/>
    <property type="project" value="GOC"/>
</dbReference>
<dbReference type="GO" id="GO:0005737">
    <property type="term" value="C:cytoplasm"/>
    <property type="evidence" value="ECO:0000314"/>
    <property type="project" value="SGD"/>
</dbReference>
<dbReference type="GO" id="GO:0005783">
    <property type="term" value="C:endoplasmic reticulum"/>
    <property type="evidence" value="ECO:0000314"/>
    <property type="project" value="SGD"/>
</dbReference>
<dbReference type="GO" id="GO:0005789">
    <property type="term" value="C:endoplasmic reticulum membrane"/>
    <property type="evidence" value="ECO:0000314"/>
    <property type="project" value="SGD"/>
</dbReference>
<dbReference type="GO" id="GO:0000329">
    <property type="term" value="C:fungal-type vacuole membrane"/>
    <property type="evidence" value="ECO:0007005"/>
    <property type="project" value="SGD"/>
</dbReference>
<dbReference type="GO" id="GO:0031965">
    <property type="term" value="C:nuclear membrane"/>
    <property type="evidence" value="ECO:0007669"/>
    <property type="project" value="UniProtKB-SubCell"/>
</dbReference>
<dbReference type="GO" id="GO:0042175">
    <property type="term" value="C:nuclear outer membrane-endoplasmic reticulum membrane network"/>
    <property type="evidence" value="ECO:0000314"/>
    <property type="project" value="SGD"/>
</dbReference>
<dbReference type="GO" id="GO:0001965">
    <property type="term" value="F:G-protein alpha-subunit binding"/>
    <property type="evidence" value="ECO:0000353"/>
    <property type="project" value="SGD"/>
</dbReference>
<dbReference type="GO" id="GO:0003729">
    <property type="term" value="F:mRNA binding"/>
    <property type="evidence" value="ECO:0000314"/>
    <property type="project" value="SGD"/>
</dbReference>
<dbReference type="GO" id="GO:0003723">
    <property type="term" value="F:RNA binding"/>
    <property type="evidence" value="ECO:0000314"/>
    <property type="project" value="SGD"/>
</dbReference>
<dbReference type="GO" id="GO:0043577">
    <property type="term" value="P:chemotropism"/>
    <property type="evidence" value="ECO:0000315"/>
    <property type="project" value="SGD"/>
</dbReference>
<dbReference type="GO" id="GO:0007059">
    <property type="term" value="P:chromosome segregation"/>
    <property type="evidence" value="ECO:0000315"/>
    <property type="project" value="SGD"/>
</dbReference>
<dbReference type="GO" id="GO:0045141">
    <property type="term" value="P:meiotic telomere clustering"/>
    <property type="evidence" value="ECO:0000315"/>
    <property type="project" value="SGD"/>
</dbReference>
<dbReference type="GO" id="GO:0000750">
    <property type="term" value="P:pheromone-dependent signal transduction involved in conjugation with cellular fusion"/>
    <property type="evidence" value="ECO:0000316"/>
    <property type="project" value="SGD"/>
</dbReference>
<dbReference type="GO" id="GO:0030466">
    <property type="term" value="P:silent mating-type cassette heterochromatin formation"/>
    <property type="evidence" value="ECO:0000315"/>
    <property type="project" value="SGD"/>
</dbReference>
<dbReference type="GO" id="GO:0031509">
    <property type="term" value="P:subtelomeric heterochromatin formation"/>
    <property type="evidence" value="ECO:0000315"/>
    <property type="project" value="SGD"/>
</dbReference>
<dbReference type="CDD" id="cd22446">
    <property type="entry name" value="KH-I_ScSCP160_rpt1"/>
    <property type="match status" value="1"/>
</dbReference>
<dbReference type="CDD" id="cd22447">
    <property type="entry name" value="KH-I_ScSCP160_rpt2"/>
    <property type="match status" value="1"/>
</dbReference>
<dbReference type="CDD" id="cd22448">
    <property type="entry name" value="KH-I_ScSCP160_rpt3"/>
    <property type="match status" value="1"/>
</dbReference>
<dbReference type="CDD" id="cd22449">
    <property type="entry name" value="KH-I_ScSCP160_rpt4"/>
    <property type="match status" value="1"/>
</dbReference>
<dbReference type="CDD" id="cd22450">
    <property type="entry name" value="KH-I_ScSCP160_rpt5"/>
    <property type="match status" value="1"/>
</dbReference>
<dbReference type="CDD" id="cd22451">
    <property type="entry name" value="KH-I_ScSCP160_rpt6"/>
    <property type="match status" value="1"/>
</dbReference>
<dbReference type="CDD" id="cd22452">
    <property type="entry name" value="KH-I_ScSCP160_rpt7"/>
    <property type="match status" value="1"/>
</dbReference>
<dbReference type="FunFam" id="3.30.1370.10:FF:000106">
    <property type="entry name" value="Scp160p"/>
    <property type="match status" value="1"/>
</dbReference>
<dbReference type="FunFam" id="3.30.1370.10:FF:000112">
    <property type="entry name" value="Scp160p"/>
    <property type="match status" value="1"/>
</dbReference>
<dbReference type="FunFam" id="3.30.1370.10:FF:000115">
    <property type="entry name" value="Scp160p"/>
    <property type="match status" value="1"/>
</dbReference>
<dbReference type="FunFam" id="3.30.1370.10:FF:000122">
    <property type="entry name" value="Scp160p"/>
    <property type="match status" value="1"/>
</dbReference>
<dbReference type="Gene3D" id="3.30.1370.10">
    <property type="entry name" value="K Homology domain, type 1"/>
    <property type="match status" value="7"/>
</dbReference>
<dbReference type="InterPro" id="IPR004087">
    <property type="entry name" value="KH_dom"/>
</dbReference>
<dbReference type="InterPro" id="IPR004088">
    <property type="entry name" value="KH_dom_type_1"/>
</dbReference>
<dbReference type="InterPro" id="IPR036612">
    <property type="entry name" value="KH_dom_type_1_sf"/>
</dbReference>
<dbReference type="InterPro" id="IPR054548">
    <property type="entry name" value="SCP160-like_KH"/>
</dbReference>
<dbReference type="PANTHER" id="PTHR10288">
    <property type="entry name" value="KH DOMAIN CONTAINING RNA BINDING PROTEIN"/>
    <property type="match status" value="1"/>
</dbReference>
<dbReference type="Pfam" id="PF00013">
    <property type="entry name" value="KH_1"/>
    <property type="match status" value="7"/>
</dbReference>
<dbReference type="Pfam" id="PF22952">
    <property type="entry name" value="KH_11"/>
    <property type="match status" value="1"/>
</dbReference>
<dbReference type="Pfam" id="PF24668">
    <property type="entry name" value="KH_Vigilin"/>
    <property type="match status" value="1"/>
</dbReference>
<dbReference type="SMART" id="SM00322">
    <property type="entry name" value="KH"/>
    <property type="match status" value="7"/>
</dbReference>
<dbReference type="SUPFAM" id="SSF54791">
    <property type="entry name" value="Eukaryotic type KH-domain (KH-domain type I)"/>
    <property type="match status" value="6"/>
</dbReference>
<dbReference type="PROSITE" id="PS50084">
    <property type="entry name" value="KH_TYPE_1"/>
    <property type="match status" value="7"/>
</dbReference>
<protein>
    <recommendedName>
        <fullName>Protein SCP160</fullName>
    </recommendedName>
    <alternativeName>
        <fullName>Protein HX</fullName>
    </alternativeName>
</protein>
<sequence length="1222" mass="134810">MSEEQTAIDSPPSTVEGSVETVTTIDSPSTTASTIAATAEEHPQLEKKPTPLPSLKDLPSLGSNAAFANVKVSWGPNMKPAVSNSPSPSPSAPSLTTGLGAKRMRSKNIQEAFTLDLQSQLSITKPELSRIVQSVKKNHDVSVESTLSKNARTFLVSGVAANVHEAKRELVKKLTKPINAVIEVPSKCKASIIGSGGRTIREISDAYEVKINVSKEVNENSYDEDMDDTTSNVSLFGDFESVNLAKAKILAIVKEETKNATIKLVVEDEKYLPYIDVSEFASDEGDEEVKVQFYKKSGDIVILGPREKAKATKTSIQDYLKKLASNLDEEKVKIPSKFQFLIDAEELKEKYNVIVTFPSTPDDELVSFVGLRDKVGEAITYARSSSKSYVVESLDISKAHSKNLTHAKNLIMYFTKYSVLKGLEESHPNVKISLPSIQSLPTAETVTIHISAKSDEANDIKAVRKELISFVNNIPPSETLVITDLDYELFGGSIKHCLLASESSVAFVQFGDYYPNDNSILLVALTEDEDFKPSIEEIQASLNKANESLNSLRTKQNNMETKTYEFSEEVQDSLFKPSSATWKLIMEDISEQEGHLQIKLHTPEENQLTVRGDEKAAKAANKIFESILNSPSSKSKMTVNIPANSVARLIGNKGSNLQQIREKFACQIDIPNEENNNASKDKTVEVTLTGLEYNLTHAKKYLAAEAKKWADIITKELIVPVKFHGSLIGPHGTYRNRLQEKYNVFINFPRDNEIVTIRGPSRGVNKAHEELKALLDFEMENGHKMVINVPAEHVPRIIGKNGDNINDIRAEYGVEMDFLQKSTDPKAQETGEVELEITGSRQNIKDAAKRVESIVAEASDFVTEVLKIDHKYHKSIVGSGGHILREIISKAGGEEIRNKSVDIPNADSENKDITVQGPQKFVKKVVEEINKIVKDAENSVTKTIDIPAERKGALIGPGGIVRRQLESEFNINLFVPNKDDPSGKITITGAPENVEKAEKKILNEIIRENFDREVDVPASIYEYVSERGAFIQKLRMDLSVNVRFGNTSKKANKLARAPIEIPLEKVCGSTEGENAEKTKFTIEEVGAPTSSEEGDITMRLTYEPIDLSSILSDGEEKEVTKDTSNDSAKKEEALDTAVKLIKERIAKAPSATYAGYVWGADTRRFNMIVGPGGSNIKKIREAADVIINVPRKSDKVNDVVYIRGTKAGVEKAGEMVLKSLRR</sequence>
<keyword id="KW-0256">Endoplasmic reticulum</keyword>
<keyword id="KW-0472">Membrane</keyword>
<keyword id="KW-0539">Nucleus</keyword>
<keyword id="KW-0597">Phosphoprotein</keyword>
<keyword id="KW-1185">Reference proteome</keyword>
<keyword id="KW-0677">Repeat</keyword>
<keyword id="KW-0694">RNA-binding</keyword>
<evidence type="ECO:0000255" key="1">
    <source>
        <dbReference type="PROSITE-ProRule" id="PRU00117"/>
    </source>
</evidence>
<evidence type="ECO:0000256" key="2">
    <source>
        <dbReference type="SAM" id="MobiDB-lite"/>
    </source>
</evidence>
<evidence type="ECO:0000305" key="3"/>
<evidence type="ECO:0007744" key="4">
    <source>
    </source>
</evidence>
<evidence type="ECO:0007744" key="5">
    <source>
    </source>
</evidence>
<evidence type="ECO:0007744" key="6">
    <source>
    </source>
</evidence>
<proteinExistence type="evidence at protein level"/>